<organism>
    <name type="scientific">Microcystis aeruginosa (strain NIES-843 / IAM M-2473)</name>
    <dbReference type="NCBI Taxonomy" id="449447"/>
    <lineage>
        <taxon>Bacteria</taxon>
        <taxon>Bacillati</taxon>
        <taxon>Cyanobacteriota</taxon>
        <taxon>Cyanophyceae</taxon>
        <taxon>Oscillatoriophycideae</taxon>
        <taxon>Chroococcales</taxon>
        <taxon>Microcystaceae</taxon>
        <taxon>Microcystis</taxon>
    </lineage>
</organism>
<gene>
    <name evidence="1" type="primary">hisC</name>
    <name type="ordered locus">MAE_28170</name>
</gene>
<proteinExistence type="inferred from homology"/>
<comment type="catalytic activity">
    <reaction evidence="1">
        <text>L-histidinol phosphate + 2-oxoglutarate = 3-(imidazol-4-yl)-2-oxopropyl phosphate + L-glutamate</text>
        <dbReference type="Rhea" id="RHEA:23744"/>
        <dbReference type="ChEBI" id="CHEBI:16810"/>
        <dbReference type="ChEBI" id="CHEBI:29985"/>
        <dbReference type="ChEBI" id="CHEBI:57766"/>
        <dbReference type="ChEBI" id="CHEBI:57980"/>
        <dbReference type="EC" id="2.6.1.9"/>
    </reaction>
</comment>
<comment type="cofactor">
    <cofactor evidence="1">
        <name>pyridoxal 5'-phosphate</name>
        <dbReference type="ChEBI" id="CHEBI:597326"/>
    </cofactor>
</comment>
<comment type="pathway">
    <text evidence="1">Amino-acid biosynthesis; L-histidine biosynthesis; L-histidine from 5-phospho-alpha-D-ribose 1-diphosphate: step 7/9.</text>
</comment>
<comment type="subunit">
    <text evidence="1">Homodimer.</text>
</comment>
<comment type="similarity">
    <text evidence="1">Belongs to the class-II pyridoxal-phosphate-dependent aminotransferase family. Histidinol-phosphate aminotransferase subfamily.</text>
</comment>
<accession>B0JJJ7</accession>
<protein>
    <recommendedName>
        <fullName evidence="1">Histidinol-phosphate aminotransferase</fullName>
        <ecNumber evidence="1">2.6.1.9</ecNumber>
    </recommendedName>
    <alternativeName>
        <fullName evidence="1">Imidazole acetol-phosphate transaminase</fullName>
    </alternativeName>
</protein>
<feature type="chain" id="PRO_1000135409" description="Histidinol-phosphate aminotransferase">
    <location>
        <begin position="1"/>
        <end position="348"/>
    </location>
</feature>
<feature type="region of interest" description="Disordered" evidence="2">
    <location>
        <begin position="1"/>
        <end position="31"/>
    </location>
</feature>
<feature type="compositionally biased region" description="Polar residues" evidence="2">
    <location>
        <begin position="18"/>
        <end position="31"/>
    </location>
</feature>
<feature type="modified residue" description="N6-(pyridoxal phosphate)lysine" evidence="1">
    <location>
        <position position="207"/>
    </location>
</feature>
<name>HIS8_MICAN</name>
<reference key="1">
    <citation type="journal article" date="2007" name="DNA Res.">
        <title>Complete genomic structure of the bloom-forming toxic cyanobacterium Microcystis aeruginosa NIES-843.</title>
        <authorList>
            <person name="Kaneko T."/>
            <person name="Nakajima N."/>
            <person name="Okamoto S."/>
            <person name="Suzuki I."/>
            <person name="Tanabe Y."/>
            <person name="Tamaoki M."/>
            <person name="Nakamura Y."/>
            <person name="Kasai F."/>
            <person name="Watanabe A."/>
            <person name="Kawashima K."/>
            <person name="Kishida Y."/>
            <person name="Ono A."/>
            <person name="Shimizu Y."/>
            <person name="Takahashi C."/>
            <person name="Minami C."/>
            <person name="Fujishiro T."/>
            <person name="Kohara M."/>
            <person name="Katoh M."/>
            <person name="Nakazaki N."/>
            <person name="Nakayama S."/>
            <person name="Yamada M."/>
            <person name="Tabata S."/>
            <person name="Watanabe M.M."/>
        </authorList>
    </citation>
    <scope>NUCLEOTIDE SEQUENCE [LARGE SCALE GENOMIC DNA]</scope>
    <source>
        <strain>NIES-843 / IAM M-247</strain>
    </source>
</reference>
<keyword id="KW-0028">Amino-acid biosynthesis</keyword>
<keyword id="KW-0032">Aminotransferase</keyword>
<keyword id="KW-0368">Histidine biosynthesis</keyword>
<keyword id="KW-0663">Pyridoxal phosphate</keyword>
<keyword id="KW-0808">Transferase</keyword>
<dbReference type="EC" id="2.6.1.9" evidence="1"/>
<dbReference type="EMBL" id="AP009552">
    <property type="protein sequence ID" value="BAG02639.1"/>
    <property type="molecule type" value="Genomic_DNA"/>
</dbReference>
<dbReference type="RefSeq" id="WP_012265860.1">
    <property type="nucleotide sequence ID" value="NC_010296.1"/>
</dbReference>
<dbReference type="SMR" id="B0JJJ7"/>
<dbReference type="STRING" id="449447.MAE_28170"/>
<dbReference type="PaxDb" id="449447-MAE_28170"/>
<dbReference type="EnsemblBacteria" id="BAG02639">
    <property type="protein sequence ID" value="BAG02639"/>
    <property type="gene ID" value="MAE_28170"/>
</dbReference>
<dbReference type="KEGG" id="mar:MAE_28170"/>
<dbReference type="PATRIC" id="fig|449447.4.peg.2574"/>
<dbReference type="eggNOG" id="COG0079">
    <property type="taxonomic scope" value="Bacteria"/>
</dbReference>
<dbReference type="HOGENOM" id="CLU_017584_3_0_3"/>
<dbReference type="BioCyc" id="MAER449447:MAE_RS12290-MONOMER"/>
<dbReference type="UniPathway" id="UPA00031">
    <property type="reaction ID" value="UER00012"/>
</dbReference>
<dbReference type="Proteomes" id="UP000001510">
    <property type="component" value="Chromosome"/>
</dbReference>
<dbReference type="GO" id="GO:0004400">
    <property type="term" value="F:histidinol-phosphate transaminase activity"/>
    <property type="evidence" value="ECO:0007669"/>
    <property type="project" value="UniProtKB-UniRule"/>
</dbReference>
<dbReference type="GO" id="GO:0030170">
    <property type="term" value="F:pyridoxal phosphate binding"/>
    <property type="evidence" value="ECO:0007669"/>
    <property type="project" value="InterPro"/>
</dbReference>
<dbReference type="GO" id="GO:0000105">
    <property type="term" value="P:L-histidine biosynthetic process"/>
    <property type="evidence" value="ECO:0007669"/>
    <property type="project" value="UniProtKB-UniRule"/>
</dbReference>
<dbReference type="CDD" id="cd00609">
    <property type="entry name" value="AAT_like"/>
    <property type="match status" value="1"/>
</dbReference>
<dbReference type="Gene3D" id="3.90.1150.10">
    <property type="entry name" value="Aspartate Aminotransferase, domain 1"/>
    <property type="match status" value="1"/>
</dbReference>
<dbReference type="Gene3D" id="3.40.640.10">
    <property type="entry name" value="Type I PLP-dependent aspartate aminotransferase-like (Major domain)"/>
    <property type="match status" value="1"/>
</dbReference>
<dbReference type="HAMAP" id="MF_01023">
    <property type="entry name" value="HisC_aminotrans_2"/>
    <property type="match status" value="1"/>
</dbReference>
<dbReference type="InterPro" id="IPR001917">
    <property type="entry name" value="Aminotrans_II_pyridoxalP_BS"/>
</dbReference>
<dbReference type="InterPro" id="IPR004839">
    <property type="entry name" value="Aminotransferase_I/II_large"/>
</dbReference>
<dbReference type="InterPro" id="IPR005861">
    <property type="entry name" value="HisP_aminotrans"/>
</dbReference>
<dbReference type="InterPro" id="IPR015424">
    <property type="entry name" value="PyrdxlP-dep_Trfase"/>
</dbReference>
<dbReference type="InterPro" id="IPR015421">
    <property type="entry name" value="PyrdxlP-dep_Trfase_major"/>
</dbReference>
<dbReference type="InterPro" id="IPR015422">
    <property type="entry name" value="PyrdxlP-dep_Trfase_small"/>
</dbReference>
<dbReference type="NCBIfam" id="TIGR01141">
    <property type="entry name" value="hisC"/>
    <property type="match status" value="1"/>
</dbReference>
<dbReference type="PANTHER" id="PTHR42885:SF2">
    <property type="entry name" value="HISTIDINOL-PHOSPHATE AMINOTRANSFERASE"/>
    <property type="match status" value="1"/>
</dbReference>
<dbReference type="PANTHER" id="PTHR42885">
    <property type="entry name" value="HISTIDINOL-PHOSPHATE AMINOTRANSFERASE-RELATED"/>
    <property type="match status" value="1"/>
</dbReference>
<dbReference type="Pfam" id="PF00155">
    <property type="entry name" value="Aminotran_1_2"/>
    <property type="match status" value="1"/>
</dbReference>
<dbReference type="SUPFAM" id="SSF53383">
    <property type="entry name" value="PLP-dependent transferases"/>
    <property type="match status" value="1"/>
</dbReference>
<dbReference type="PROSITE" id="PS00599">
    <property type="entry name" value="AA_TRANSFER_CLASS_2"/>
    <property type="match status" value="1"/>
</dbReference>
<sequence>MLPTRDCVRQTPAYTPGEQPQTAGFTKLNTNENPYPPPAEIFAHLQEQLEKVRLYPDPISKELRQTAAELYGIAADQIIAGNGSDDILNIALRTFVNPCESVAFLDLTYSLYETIARVHGANIIEFPTNDKFALEGPIICPEAKLIFLASPNPPLGKHLDRDYLEATCANASGLVLIDEAYVDFSDDNHLDFLSRYDNVIISRTMSKSYSLAGLRVGFGFASRAIIEQMDKVRDSYNLDRIAQTLATAALKHHNYFEQVWQKVRQTRGRLITSLRELGFIVFDSEANFILASPPQISASELYNQLKERQILVRYFKHPRIQNYVRISIGTDGEIDRLLSAIQEIMGTN</sequence>
<evidence type="ECO:0000255" key="1">
    <source>
        <dbReference type="HAMAP-Rule" id="MF_01023"/>
    </source>
</evidence>
<evidence type="ECO:0000256" key="2">
    <source>
        <dbReference type="SAM" id="MobiDB-lite"/>
    </source>
</evidence>